<evidence type="ECO:0000255" key="1">
    <source>
        <dbReference type="HAMAP-Rule" id="MF_01589"/>
    </source>
</evidence>
<evidence type="ECO:0000256" key="2">
    <source>
        <dbReference type="SAM" id="MobiDB-lite"/>
    </source>
</evidence>
<accession>A4TJK8</accession>
<reference key="1">
    <citation type="submission" date="2007-02" db="EMBL/GenBank/DDBJ databases">
        <title>Complete sequence of chromosome of Yersinia pestis Pestoides F.</title>
        <authorList>
            <consortium name="US DOE Joint Genome Institute"/>
            <person name="Copeland A."/>
            <person name="Lucas S."/>
            <person name="Lapidus A."/>
            <person name="Barry K."/>
            <person name="Detter J.C."/>
            <person name="Glavina del Rio T."/>
            <person name="Hammon N."/>
            <person name="Israni S."/>
            <person name="Dalin E."/>
            <person name="Tice H."/>
            <person name="Pitluck S."/>
            <person name="Di Bartolo G."/>
            <person name="Chain P."/>
            <person name="Malfatti S."/>
            <person name="Shin M."/>
            <person name="Vergez L."/>
            <person name="Schmutz J."/>
            <person name="Larimer F."/>
            <person name="Land M."/>
            <person name="Hauser L."/>
            <person name="Worsham P."/>
            <person name="Chu M."/>
            <person name="Bearden S."/>
            <person name="Garcia E."/>
            <person name="Richardson P."/>
        </authorList>
    </citation>
    <scope>NUCLEOTIDE SEQUENCE [LARGE SCALE GENOMIC DNA]</scope>
    <source>
        <strain>Pestoides F</strain>
    </source>
</reference>
<comment type="function">
    <text evidence="1">Catalyzes the conversion of S-adenosyl-L-methionine (SAM) to carboxy-S-adenosyl-L-methionine (Cx-SAM).</text>
</comment>
<comment type="catalytic activity">
    <reaction evidence="1">
        <text>prephenate + S-adenosyl-L-methionine = carboxy-S-adenosyl-L-methionine + 3-phenylpyruvate + H2O</text>
        <dbReference type="Rhea" id="RHEA:51692"/>
        <dbReference type="ChEBI" id="CHEBI:15377"/>
        <dbReference type="ChEBI" id="CHEBI:18005"/>
        <dbReference type="ChEBI" id="CHEBI:29934"/>
        <dbReference type="ChEBI" id="CHEBI:59789"/>
        <dbReference type="ChEBI" id="CHEBI:134278"/>
    </reaction>
</comment>
<comment type="subunit">
    <text evidence="1">Homodimer.</text>
</comment>
<comment type="similarity">
    <text evidence="1">Belongs to the class I-like SAM-binding methyltransferase superfamily. Cx-SAM synthase family.</text>
</comment>
<organism>
    <name type="scientific">Yersinia pestis (strain Pestoides F)</name>
    <dbReference type="NCBI Taxonomy" id="386656"/>
    <lineage>
        <taxon>Bacteria</taxon>
        <taxon>Pseudomonadati</taxon>
        <taxon>Pseudomonadota</taxon>
        <taxon>Gammaproteobacteria</taxon>
        <taxon>Enterobacterales</taxon>
        <taxon>Yersiniaceae</taxon>
        <taxon>Yersinia</taxon>
    </lineage>
</organism>
<feature type="chain" id="PRO_0000314409" description="Carboxy-S-adenosyl-L-methionine synthase">
    <location>
        <begin position="1"/>
        <end position="267"/>
    </location>
</feature>
<feature type="region of interest" description="Disordered" evidence="2">
    <location>
        <begin position="1"/>
        <end position="25"/>
    </location>
</feature>
<feature type="compositionally biased region" description="Polar residues" evidence="2">
    <location>
        <begin position="1"/>
        <end position="11"/>
    </location>
</feature>
<feature type="compositionally biased region" description="Basic and acidic residues" evidence="2">
    <location>
        <begin position="12"/>
        <end position="24"/>
    </location>
</feature>
<feature type="binding site" evidence="1">
    <location>
        <position position="59"/>
    </location>
    <ligand>
        <name>S-adenosyl-L-methionine</name>
        <dbReference type="ChEBI" id="CHEBI:59789"/>
    </ligand>
</feature>
<feature type="binding site" evidence="1">
    <location>
        <begin position="84"/>
        <end position="86"/>
    </location>
    <ligand>
        <name>S-adenosyl-L-methionine</name>
        <dbReference type="ChEBI" id="CHEBI:59789"/>
    </ligand>
</feature>
<feature type="binding site" evidence="1">
    <location>
        <begin position="109"/>
        <end position="110"/>
    </location>
    <ligand>
        <name>S-adenosyl-L-methionine</name>
        <dbReference type="ChEBI" id="CHEBI:59789"/>
    </ligand>
</feature>
<feature type="binding site" evidence="1">
    <location>
        <begin position="137"/>
        <end position="138"/>
    </location>
    <ligand>
        <name>S-adenosyl-L-methionine</name>
        <dbReference type="ChEBI" id="CHEBI:59789"/>
    </ligand>
</feature>
<feature type="binding site" evidence="1">
    <location>
        <position position="152"/>
    </location>
    <ligand>
        <name>S-adenosyl-L-methionine</name>
        <dbReference type="ChEBI" id="CHEBI:59789"/>
    </ligand>
</feature>
<feature type="binding site" evidence="1">
    <location>
        <position position="219"/>
    </location>
    <ligand>
        <name>S-adenosyl-L-methionine</name>
        <dbReference type="ChEBI" id="CHEBI:59789"/>
    </ligand>
</feature>
<keyword id="KW-0949">S-adenosyl-L-methionine</keyword>
<keyword id="KW-0808">Transferase</keyword>
<name>CMOA_YERPP</name>
<protein>
    <recommendedName>
        <fullName evidence="1">Carboxy-S-adenosyl-L-methionine synthase</fullName>
        <shortName evidence="1">Cx-SAM synthase</shortName>
        <ecNumber evidence="1">2.1.3.-</ecNumber>
    </recommendedName>
</protein>
<gene>
    <name evidence="1" type="primary">cmoA</name>
    <name type="ordered locus">YPDSF_1072</name>
</gene>
<proteinExistence type="inferred from homology"/>
<sequence>MPNRDTQSQNDTPRHSPEAAEPQRDSLFAAPIAKLGDWTFDEKVAEVFPDMIQRSVPGYSNIISMIGMLAERFVQPNSQIYDLGCSLGAATLSMRRNIKAEGCKIIAVDNSPAMVERCRRHIDAFRAETPVDVVEADILDIKLENASMVVLNFTLQFLEPANRQRLLNQVYQGLRPGGALVLSEKFSFADHNVGELLFNMHHDFKRANGYSELEISQKRSMLENVMLTDSVETHKNRLHQAGFEHAEVWFQCFNFGSLIALKAGEAQ</sequence>
<dbReference type="EC" id="2.1.3.-" evidence="1"/>
<dbReference type="EMBL" id="CP000668">
    <property type="protein sequence ID" value="ABP39470.1"/>
    <property type="molecule type" value="Genomic_DNA"/>
</dbReference>
<dbReference type="RefSeq" id="WP_002211207.1">
    <property type="nucleotide sequence ID" value="NZ_CP009715.1"/>
</dbReference>
<dbReference type="SMR" id="A4TJK8"/>
<dbReference type="GeneID" id="57976611"/>
<dbReference type="KEGG" id="ypp:YPDSF_1072"/>
<dbReference type="PATRIC" id="fig|386656.14.peg.2761"/>
<dbReference type="GO" id="GO:0016743">
    <property type="term" value="F:carboxyl- or carbamoyltransferase activity"/>
    <property type="evidence" value="ECO:0007669"/>
    <property type="project" value="UniProtKB-UniRule"/>
</dbReference>
<dbReference type="GO" id="GO:1904047">
    <property type="term" value="F:S-adenosyl-L-methionine binding"/>
    <property type="evidence" value="ECO:0007669"/>
    <property type="project" value="UniProtKB-UniRule"/>
</dbReference>
<dbReference type="GO" id="GO:0002098">
    <property type="term" value="P:tRNA wobble uridine modification"/>
    <property type="evidence" value="ECO:0007669"/>
    <property type="project" value="InterPro"/>
</dbReference>
<dbReference type="CDD" id="cd02440">
    <property type="entry name" value="AdoMet_MTases"/>
    <property type="match status" value="1"/>
</dbReference>
<dbReference type="Gene3D" id="3.40.50.150">
    <property type="entry name" value="Vaccinia Virus protein VP39"/>
    <property type="match status" value="1"/>
</dbReference>
<dbReference type="HAMAP" id="MF_01589">
    <property type="entry name" value="Cx_SAM_synthase"/>
    <property type="match status" value="1"/>
</dbReference>
<dbReference type="InterPro" id="IPR005271">
    <property type="entry name" value="CmoA"/>
</dbReference>
<dbReference type="InterPro" id="IPR041698">
    <property type="entry name" value="Methyltransf_25"/>
</dbReference>
<dbReference type="InterPro" id="IPR029063">
    <property type="entry name" value="SAM-dependent_MTases_sf"/>
</dbReference>
<dbReference type="NCBIfam" id="TIGR00740">
    <property type="entry name" value="carboxy-S-adenosyl-L-methionine synthase CmoA"/>
    <property type="match status" value="1"/>
</dbReference>
<dbReference type="NCBIfam" id="NF011995">
    <property type="entry name" value="PRK15451.1"/>
    <property type="match status" value="1"/>
</dbReference>
<dbReference type="PANTHER" id="PTHR43861:SF2">
    <property type="entry name" value="CARBOXY-S-ADENOSYL-L-METHIONINE SYNTHASE"/>
    <property type="match status" value="1"/>
</dbReference>
<dbReference type="PANTHER" id="PTHR43861">
    <property type="entry name" value="TRANS-ACONITATE 2-METHYLTRANSFERASE-RELATED"/>
    <property type="match status" value="1"/>
</dbReference>
<dbReference type="Pfam" id="PF13649">
    <property type="entry name" value="Methyltransf_25"/>
    <property type="match status" value="1"/>
</dbReference>
<dbReference type="PIRSF" id="PIRSF006325">
    <property type="entry name" value="MeTrfase_bac"/>
    <property type="match status" value="1"/>
</dbReference>
<dbReference type="SUPFAM" id="SSF53335">
    <property type="entry name" value="S-adenosyl-L-methionine-dependent methyltransferases"/>
    <property type="match status" value="1"/>
</dbReference>